<name>MMAA1_MYCBO</name>
<reference key="1">
    <citation type="journal article" date="1997" name="Mol. Microbiol.">
        <title>Mycobacterium bovis BCG genes involved in the biosynthesis of cyclopropyl keto- and hydroxy-mycolic acids.</title>
        <authorList>
            <person name="Dubnau E."/>
            <person name="Laneelle M.-A."/>
            <person name="Soares S."/>
            <person name="Benichou A."/>
            <person name="Vaz T."/>
            <person name="Prome D."/>
            <person name="Prome J.-C."/>
            <person name="Daffe M."/>
            <person name="Quemard A."/>
        </authorList>
    </citation>
    <scope>NUCLEOTIDE SEQUENCE [GENOMIC DNA]</scope>
    <source>
        <strain>BCG / Pasteur</strain>
    </source>
</reference>
<reference key="2">
    <citation type="journal article" date="2003" name="Proc. Natl. Acad. Sci. U.S.A.">
        <title>The complete genome sequence of Mycobacterium bovis.</title>
        <authorList>
            <person name="Garnier T."/>
            <person name="Eiglmeier K."/>
            <person name="Camus J.-C."/>
            <person name="Medina N."/>
            <person name="Mansoor H."/>
            <person name="Pryor M."/>
            <person name="Duthoy S."/>
            <person name="Grondin S."/>
            <person name="Lacroix C."/>
            <person name="Monsempe C."/>
            <person name="Simon S."/>
            <person name="Harris B."/>
            <person name="Atkin R."/>
            <person name="Doggett J."/>
            <person name="Mayes R."/>
            <person name="Keating L."/>
            <person name="Wheeler P.R."/>
            <person name="Parkhill J."/>
            <person name="Barrell B.G."/>
            <person name="Cole S.T."/>
            <person name="Gordon S.V."/>
            <person name="Hewinson R.G."/>
        </authorList>
    </citation>
    <scope>NUCLEOTIDE SEQUENCE [LARGE SCALE GENOMIC DNA]</scope>
    <source>
        <strain>ATCC BAA-935 / AF2122/97</strain>
    </source>
</reference>
<reference key="3">
    <citation type="journal article" date="2017" name="Genome Announc.">
        <title>Updated reference genome sequence and annotation of Mycobacterium bovis AF2122/97.</title>
        <authorList>
            <person name="Malone K.M."/>
            <person name="Farrell D."/>
            <person name="Stuber T.P."/>
            <person name="Schubert O.T."/>
            <person name="Aebersold R."/>
            <person name="Robbe-Austerman S."/>
            <person name="Gordon S.V."/>
        </authorList>
    </citation>
    <scope>NUCLEOTIDE SEQUENCE [LARGE SCALE GENOMIC DNA]</scope>
    <scope>GENOME REANNOTATION</scope>
    <source>
        <strain>ATCC BAA-935 / AF2122/97</strain>
    </source>
</reference>
<dbReference type="EC" id="2.1.1.-"/>
<dbReference type="EMBL" id="U77466">
    <property type="protein sequence ID" value="AAC44873.1"/>
    <property type="molecule type" value="Genomic_DNA"/>
</dbReference>
<dbReference type="EMBL" id="LT708304">
    <property type="protein sequence ID" value="SIT99262.1"/>
    <property type="molecule type" value="Genomic_DNA"/>
</dbReference>
<dbReference type="RefSeq" id="NP_854322.1">
    <property type="nucleotide sequence ID" value="NC_002945.3"/>
</dbReference>
<dbReference type="RefSeq" id="WP_003403310.1">
    <property type="nucleotide sequence ID" value="NC_002945.4"/>
</dbReference>
<dbReference type="PDB" id="8RBD">
    <property type="method" value="X-ray"/>
    <property type="resolution" value="1.50 A"/>
    <property type="chains" value="A/A0A0=1-286"/>
</dbReference>
<dbReference type="PDB" id="8RBE">
    <property type="method" value="X-ray"/>
    <property type="resolution" value="1.90 A"/>
    <property type="chains" value="A/B=1-286"/>
</dbReference>
<dbReference type="PDB" id="8RBL">
    <property type="method" value="X-ray"/>
    <property type="resolution" value="1.55 A"/>
    <property type="chains" value="A/B=1-286"/>
</dbReference>
<dbReference type="PDBsum" id="8RBD"/>
<dbReference type="PDBsum" id="8RBE"/>
<dbReference type="PDBsum" id="8RBL"/>
<dbReference type="SMR" id="P0A5Q1"/>
<dbReference type="GeneID" id="45424605"/>
<dbReference type="KEGG" id="mbo:BQ2027_MB0664C"/>
<dbReference type="PATRIC" id="fig|233413.5.peg.724"/>
<dbReference type="UniPathway" id="UPA00915"/>
<dbReference type="Proteomes" id="UP000001419">
    <property type="component" value="Chromosome"/>
</dbReference>
<dbReference type="GO" id="GO:0008168">
    <property type="term" value="F:methyltransferase activity"/>
    <property type="evidence" value="ECO:0007669"/>
    <property type="project" value="UniProtKB-KW"/>
</dbReference>
<dbReference type="GO" id="GO:0008610">
    <property type="term" value="P:lipid biosynthetic process"/>
    <property type="evidence" value="ECO:0007669"/>
    <property type="project" value="InterPro"/>
</dbReference>
<dbReference type="GO" id="GO:0032259">
    <property type="term" value="P:methylation"/>
    <property type="evidence" value="ECO:0007669"/>
    <property type="project" value="UniProtKB-KW"/>
</dbReference>
<dbReference type="CDD" id="cd02440">
    <property type="entry name" value="AdoMet_MTases"/>
    <property type="match status" value="1"/>
</dbReference>
<dbReference type="FunFam" id="3.40.50.150:FF:000115">
    <property type="entry name" value="Cyclopropane mycolic acid synthase 1"/>
    <property type="match status" value="1"/>
</dbReference>
<dbReference type="Gene3D" id="3.40.50.150">
    <property type="entry name" value="Vaccinia Virus protein VP39"/>
    <property type="match status" value="1"/>
</dbReference>
<dbReference type="InterPro" id="IPR050723">
    <property type="entry name" value="CFA/CMAS"/>
</dbReference>
<dbReference type="InterPro" id="IPR003333">
    <property type="entry name" value="CMAS"/>
</dbReference>
<dbReference type="InterPro" id="IPR047672">
    <property type="entry name" value="CMAS_actinobact"/>
</dbReference>
<dbReference type="InterPro" id="IPR029063">
    <property type="entry name" value="SAM-dependent_MTases_sf"/>
</dbReference>
<dbReference type="NCBIfam" id="NF040660">
    <property type="entry name" value="mycolic_MTase"/>
    <property type="match status" value="1"/>
</dbReference>
<dbReference type="PANTHER" id="PTHR43667">
    <property type="entry name" value="CYCLOPROPANE-FATTY-ACYL-PHOSPHOLIPID SYNTHASE"/>
    <property type="match status" value="1"/>
</dbReference>
<dbReference type="PANTHER" id="PTHR43667:SF1">
    <property type="entry name" value="CYCLOPROPANE-FATTY-ACYL-PHOSPHOLIPID SYNTHASE"/>
    <property type="match status" value="1"/>
</dbReference>
<dbReference type="Pfam" id="PF02353">
    <property type="entry name" value="CMAS"/>
    <property type="match status" value="1"/>
</dbReference>
<dbReference type="PIRSF" id="PIRSF003085">
    <property type="entry name" value="CMAS"/>
    <property type="match status" value="1"/>
</dbReference>
<dbReference type="SUPFAM" id="SSF53335">
    <property type="entry name" value="S-adenosyl-L-methionine-dependent methyltransferases"/>
    <property type="match status" value="1"/>
</dbReference>
<evidence type="ECO:0000250" key="1"/>
<evidence type="ECO:0000305" key="2"/>
<proteinExistence type="evidence at protein level"/>
<organism>
    <name type="scientific">Mycobacterium bovis (strain ATCC BAA-935 / AF2122/97)</name>
    <dbReference type="NCBI Taxonomy" id="233413"/>
    <lineage>
        <taxon>Bacteria</taxon>
        <taxon>Bacillati</taxon>
        <taxon>Actinomycetota</taxon>
        <taxon>Actinomycetes</taxon>
        <taxon>Mycobacteriales</taxon>
        <taxon>Mycobacteriaceae</taxon>
        <taxon>Mycobacterium</taxon>
        <taxon>Mycobacterium tuberculosis complex</taxon>
    </lineage>
</organism>
<gene>
    <name type="primary">cmaD</name>
    <name type="synonym">mma1</name>
    <name type="synonym">mmaA1</name>
    <name type="synonym">mmas-1</name>
    <name type="ordered locus">BQ2027_MB0664C</name>
</gene>
<protein>
    <recommendedName>
        <fullName>Mycolic acid methyltransferase MmaA1</fullName>
        <ecNumber>2.1.1.-</ecNumber>
    </recommendedName>
    <alternativeName>
        <fullName>S-adenosylmethionine-dependent methyltransferase</fullName>
        <shortName>AdoMet-MT</shortName>
        <shortName>SAM-MT</shortName>
    </alternativeName>
</protein>
<sequence>MAKLRPYYEESQSAYDISDDFFALFLDPTWVYTCAYFERDDMTLEEAQLAKVDLALDKLNLEPGMTLLDVGCGWGGALVRAVEKYDVNVIGLTLSRNHYERSKDRLAAIGTQRRAEARLQGWEEFEENVDRIVSFEAFDAFKKERYLTFFERSYDILPDDGRMLLHSLFTYDRRWLHEQGIALTMSDLRFLKFLRESIFPGGELPSEPDIVDNAQAAGFTIEHVQLLQQHYARTLDAWAANLQAARERAIAVQSEEVYNNFMHYLTGCAERFRRGLINVAQFTMTK</sequence>
<feature type="chain" id="PRO_0000096503" description="Mycolic acid methyltransferase MmaA1">
    <location>
        <begin position="1"/>
        <end position="286"/>
    </location>
</feature>
<feature type="active site" evidence="1">
    <location>
        <position position="268"/>
    </location>
</feature>
<feature type="binding site" evidence="1">
    <location>
        <begin position="32"/>
        <end position="33"/>
    </location>
    <ligand>
        <name>S-adenosyl-L-methionine</name>
        <dbReference type="ChEBI" id="CHEBI:59789"/>
    </ligand>
</feature>
<feature type="binding site" evidence="1">
    <location>
        <begin position="71"/>
        <end position="73"/>
    </location>
    <ligand>
        <name>S-adenosyl-L-methionine</name>
        <dbReference type="ChEBI" id="CHEBI:59789"/>
    </ligand>
</feature>
<feature type="binding site" evidence="1">
    <location>
        <begin position="93"/>
        <end position="98"/>
    </location>
    <ligand>
        <name>S-adenosyl-L-methionine</name>
        <dbReference type="ChEBI" id="CHEBI:59789"/>
    </ligand>
</feature>
<feature type="binding site" evidence="1">
    <location>
        <begin position="122"/>
        <end position="123"/>
    </location>
    <ligand>
        <name>S-adenosyl-L-methionine</name>
        <dbReference type="ChEBI" id="CHEBI:59789"/>
    </ligand>
</feature>
<keyword id="KW-0002">3D-structure</keyword>
<keyword id="KW-0444">Lipid biosynthesis</keyword>
<keyword id="KW-0443">Lipid metabolism</keyword>
<keyword id="KW-0489">Methyltransferase</keyword>
<keyword id="KW-1185">Reference proteome</keyword>
<keyword id="KW-0949">S-adenosyl-L-methionine</keyword>
<keyword id="KW-0808">Transferase</keyword>
<accession>P0A5Q1</accession>
<accession>A0A1R3XY38</accession>
<accession>P72025</accession>
<accession>P94922</accession>
<accession>P96934</accession>
<accession>X2BFH5</accession>
<comment type="function">
    <text evidence="1">Involved in the conversion of a cis-olefin into a trans-olefin with concomitant introduction of an allylic methyl branch at the proximal position of the precursor to both the methoxy and ketomycolic acids. It directly affects the cis- to trans ratio and indirectly affects the keto to methoxy ratio (By similarity).</text>
</comment>
<comment type="pathway">
    <text>Lipid metabolism; mycolic acid biosynthesis.</text>
</comment>
<comment type="similarity">
    <text evidence="2">Belongs to the CFA/CMAS family.</text>
</comment>